<sequence>MTASAPAASTSARLLDGRRIAEELLDGLKSRVDARLAAGKARPGLAVVLVGGDPASSVYVRNKRRAAEKVGIEAFDYDLPQCTSEAELAALIDELNADPKIHGILIQLPLPGIPDANRLIQRIDPRKDVDGFHPQNVGHLALREFGLRPCTPRGIVTLLSHTDQPVRGRNATIVGVSNHVGRPMGLELLIAGCTVTSCHKFTPPDVLEASVRNADILVVAVGRPGLIPGEWVKPGAVVIDVGINRLDDGRLVGDVGFDAAAQRAAWITPVPGGVGPMTVATLMQNTIEAADAAGIEGAGVGIR</sequence>
<reference key="1">
    <citation type="journal article" date="2005" name="Nucleic Acids Res.">
        <title>The genome sequence of Xanthomonas oryzae pathovar oryzae KACC10331, the bacterial blight pathogen of rice.</title>
        <authorList>
            <person name="Lee B.-M."/>
            <person name="Park Y.-J."/>
            <person name="Park D.-S."/>
            <person name="Kang H.-W."/>
            <person name="Kim J.-G."/>
            <person name="Song E.-S."/>
            <person name="Park I.-C."/>
            <person name="Yoon U.-H."/>
            <person name="Hahn J.-H."/>
            <person name="Koo B.-S."/>
            <person name="Lee G.-B."/>
            <person name="Kim H."/>
            <person name="Park H.-S."/>
            <person name="Yoon K.-O."/>
            <person name="Kim J.-H."/>
            <person name="Jung C.-H."/>
            <person name="Koh N.-H."/>
            <person name="Seo J.-S."/>
            <person name="Go S.-J."/>
        </authorList>
    </citation>
    <scope>NUCLEOTIDE SEQUENCE [LARGE SCALE GENOMIC DNA]</scope>
    <source>
        <strain>KACC10331 / KXO85</strain>
    </source>
</reference>
<proteinExistence type="inferred from homology"/>
<protein>
    <recommendedName>
        <fullName evidence="1">Bifunctional protein FolD</fullName>
    </recommendedName>
    <domain>
        <recommendedName>
            <fullName evidence="1">Methylenetetrahydrofolate dehydrogenase</fullName>
            <ecNumber evidence="1">1.5.1.5</ecNumber>
        </recommendedName>
    </domain>
    <domain>
        <recommendedName>
            <fullName evidence="1">Methenyltetrahydrofolate cyclohydrolase</fullName>
            <ecNumber evidence="1">3.5.4.9</ecNumber>
        </recommendedName>
    </domain>
</protein>
<dbReference type="EC" id="1.5.1.5" evidence="1"/>
<dbReference type="EC" id="3.5.4.9" evidence="1"/>
<dbReference type="EMBL" id="AE013598">
    <property type="protein sequence ID" value="AAW75447.1"/>
    <property type="molecule type" value="Genomic_DNA"/>
</dbReference>
<dbReference type="SMR" id="Q5H0S4"/>
<dbReference type="STRING" id="291331.XOO2193"/>
<dbReference type="KEGG" id="xoo:XOO2193"/>
<dbReference type="HOGENOM" id="CLU_034045_2_1_6"/>
<dbReference type="UniPathway" id="UPA00193"/>
<dbReference type="Proteomes" id="UP000006735">
    <property type="component" value="Chromosome"/>
</dbReference>
<dbReference type="GO" id="GO:0005829">
    <property type="term" value="C:cytosol"/>
    <property type="evidence" value="ECO:0007669"/>
    <property type="project" value="TreeGrafter"/>
</dbReference>
<dbReference type="GO" id="GO:0004477">
    <property type="term" value="F:methenyltetrahydrofolate cyclohydrolase activity"/>
    <property type="evidence" value="ECO:0007669"/>
    <property type="project" value="UniProtKB-UniRule"/>
</dbReference>
<dbReference type="GO" id="GO:0004488">
    <property type="term" value="F:methylenetetrahydrofolate dehydrogenase (NADP+) activity"/>
    <property type="evidence" value="ECO:0007669"/>
    <property type="project" value="UniProtKB-UniRule"/>
</dbReference>
<dbReference type="GO" id="GO:0000105">
    <property type="term" value="P:L-histidine biosynthetic process"/>
    <property type="evidence" value="ECO:0007669"/>
    <property type="project" value="UniProtKB-KW"/>
</dbReference>
<dbReference type="GO" id="GO:0009086">
    <property type="term" value="P:methionine biosynthetic process"/>
    <property type="evidence" value="ECO:0007669"/>
    <property type="project" value="UniProtKB-KW"/>
</dbReference>
<dbReference type="GO" id="GO:0006164">
    <property type="term" value="P:purine nucleotide biosynthetic process"/>
    <property type="evidence" value="ECO:0007669"/>
    <property type="project" value="UniProtKB-KW"/>
</dbReference>
<dbReference type="GO" id="GO:0035999">
    <property type="term" value="P:tetrahydrofolate interconversion"/>
    <property type="evidence" value="ECO:0007669"/>
    <property type="project" value="UniProtKB-UniRule"/>
</dbReference>
<dbReference type="CDD" id="cd01080">
    <property type="entry name" value="NAD_bind_m-THF_DH_Cyclohyd"/>
    <property type="match status" value="1"/>
</dbReference>
<dbReference type="FunFam" id="3.40.50.720:FF:000006">
    <property type="entry name" value="Bifunctional protein FolD"/>
    <property type="match status" value="1"/>
</dbReference>
<dbReference type="FunFam" id="3.40.50.10860:FF:000005">
    <property type="entry name" value="C-1-tetrahydrofolate synthase, cytoplasmic, putative"/>
    <property type="match status" value="1"/>
</dbReference>
<dbReference type="Gene3D" id="3.40.50.10860">
    <property type="entry name" value="Leucine Dehydrogenase, chain A, domain 1"/>
    <property type="match status" value="1"/>
</dbReference>
<dbReference type="Gene3D" id="3.40.50.720">
    <property type="entry name" value="NAD(P)-binding Rossmann-like Domain"/>
    <property type="match status" value="1"/>
</dbReference>
<dbReference type="HAMAP" id="MF_01576">
    <property type="entry name" value="THF_DHG_CYH"/>
    <property type="match status" value="1"/>
</dbReference>
<dbReference type="InterPro" id="IPR046346">
    <property type="entry name" value="Aminoacid_DH-like_N_sf"/>
</dbReference>
<dbReference type="InterPro" id="IPR036291">
    <property type="entry name" value="NAD(P)-bd_dom_sf"/>
</dbReference>
<dbReference type="InterPro" id="IPR000672">
    <property type="entry name" value="THF_DH/CycHdrlase"/>
</dbReference>
<dbReference type="InterPro" id="IPR020630">
    <property type="entry name" value="THF_DH/CycHdrlase_cat_dom"/>
</dbReference>
<dbReference type="InterPro" id="IPR020867">
    <property type="entry name" value="THF_DH/CycHdrlase_CS"/>
</dbReference>
<dbReference type="InterPro" id="IPR020631">
    <property type="entry name" value="THF_DH/CycHdrlase_NAD-bd_dom"/>
</dbReference>
<dbReference type="NCBIfam" id="NF008058">
    <property type="entry name" value="PRK10792.1"/>
    <property type="match status" value="1"/>
</dbReference>
<dbReference type="PANTHER" id="PTHR48099:SF5">
    <property type="entry name" value="C-1-TETRAHYDROFOLATE SYNTHASE, CYTOPLASMIC"/>
    <property type="match status" value="1"/>
</dbReference>
<dbReference type="PANTHER" id="PTHR48099">
    <property type="entry name" value="C-1-TETRAHYDROFOLATE SYNTHASE, CYTOPLASMIC-RELATED"/>
    <property type="match status" value="1"/>
</dbReference>
<dbReference type="Pfam" id="PF00763">
    <property type="entry name" value="THF_DHG_CYH"/>
    <property type="match status" value="1"/>
</dbReference>
<dbReference type="Pfam" id="PF02882">
    <property type="entry name" value="THF_DHG_CYH_C"/>
    <property type="match status" value="1"/>
</dbReference>
<dbReference type="PRINTS" id="PR00085">
    <property type="entry name" value="THFDHDRGNASE"/>
</dbReference>
<dbReference type="SUPFAM" id="SSF53223">
    <property type="entry name" value="Aminoacid dehydrogenase-like, N-terminal domain"/>
    <property type="match status" value="1"/>
</dbReference>
<dbReference type="SUPFAM" id="SSF51735">
    <property type="entry name" value="NAD(P)-binding Rossmann-fold domains"/>
    <property type="match status" value="1"/>
</dbReference>
<dbReference type="PROSITE" id="PS00767">
    <property type="entry name" value="THF_DHG_CYH_2"/>
    <property type="match status" value="1"/>
</dbReference>
<gene>
    <name evidence="1" type="primary">folD</name>
    <name type="ordered locus">XOO2193</name>
</gene>
<name>FOLD_XANOR</name>
<comment type="function">
    <text evidence="1">Catalyzes the oxidation of 5,10-methylenetetrahydrofolate to 5,10-methenyltetrahydrofolate and then the hydrolysis of 5,10-methenyltetrahydrofolate to 10-formyltetrahydrofolate.</text>
</comment>
<comment type="catalytic activity">
    <reaction evidence="1">
        <text>(6R)-5,10-methylene-5,6,7,8-tetrahydrofolate + NADP(+) = (6R)-5,10-methenyltetrahydrofolate + NADPH</text>
        <dbReference type="Rhea" id="RHEA:22812"/>
        <dbReference type="ChEBI" id="CHEBI:15636"/>
        <dbReference type="ChEBI" id="CHEBI:57455"/>
        <dbReference type="ChEBI" id="CHEBI:57783"/>
        <dbReference type="ChEBI" id="CHEBI:58349"/>
        <dbReference type="EC" id="1.5.1.5"/>
    </reaction>
</comment>
<comment type="catalytic activity">
    <reaction evidence="1">
        <text>(6R)-5,10-methenyltetrahydrofolate + H2O = (6R)-10-formyltetrahydrofolate + H(+)</text>
        <dbReference type="Rhea" id="RHEA:23700"/>
        <dbReference type="ChEBI" id="CHEBI:15377"/>
        <dbReference type="ChEBI" id="CHEBI:15378"/>
        <dbReference type="ChEBI" id="CHEBI:57455"/>
        <dbReference type="ChEBI" id="CHEBI:195366"/>
        <dbReference type="EC" id="3.5.4.9"/>
    </reaction>
</comment>
<comment type="pathway">
    <text evidence="1">One-carbon metabolism; tetrahydrofolate interconversion.</text>
</comment>
<comment type="subunit">
    <text evidence="1">Homodimer.</text>
</comment>
<comment type="similarity">
    <text evidence="1">Belongs to the tetrahydrofolate dehydrogenase/cyclohydrolase family.</text>
</comment>
<keyword id="KW-0028">Amino-acid biosynthesis</keyword>
<keyword id="KW-0368">Histidine biosynthesis</keyword>
<keyword id="KW-0378">Hydrolase</keyword>
<keyword id="KW-0486">Methionine biosynthesis</keyword>
<keyword id="KW-0511">Multifunctional enzyme</keyword>
<keyword id="KW-0521">NADP</keyword>
<keyword id="KW-0554">One-carbon metabolism</keyword>
<keyword id="KW-0560">Oxidoreductase</keyword>
<keyword id="KW-0658">Purine biosynthesis</keyword>
<keyword id="KW-1185">Reference proteome</keyword>
<evidence type="ECO:0000255" key="1">
    <source>
        <dbReference type="HAMAP-Rule" id="MF_01576"/>
    </source>
</evidence>
<accession>Q5H0S4</accession>
<feature type="chain" id="PRO_0000268569" description="Bifunctional protein FolD">
    <location>
        <begin position="1"/>
        <end position="303"/>
    </location>
</feature>
<feature type="binding site" evidence="1">
    <location>
        <begin position="175"/>
        <end position="177"/>
    </location>
    <ligand>
        <name>NADP(+)</name>
        <dbReference type="ChEBI" id="CHEBI:58349"/>
    </ligand>
</feature>
<feature type="binding site" evidence="1">
    <location>
        <position position="243"/>
    </location>
    <ligand>
        <name>NADP(+)</name>
        <dbReference type="ChEBI" id="CHEBI:58349"/>
    </ligand>
</feature>
<organism>
    <name type="scientific">Xanthomonas oryzae pv. oryzae (strain KACC10331 / KXO85)</name>
    <dbReference type="NCBI Taxonomy" id="291331"/>
    <lineage>
        <taxon>Bacteria</taxon>
        <taxon>Pseudomonadati</taxon>
        <taxon>Pseudomonadota</taxon>
        <taxon>Gammaproteobacteria</taxon>
        <taxon>Lysobacterales</taxon>
        <taxon>Lysobacteraceae</taxon>
        <taxon>Xanthomonas</taxon>
    </lineage>
</organism>